<organism>
    <name type="scientific">Rattus norvegicus</name>
    <name type="common">Rat</name>
    <dbReference type="NCBI Taxonomy" id="10116"/>
    <lineage>
        <taxon>Eukaryota</taxon>
        <taxon>Metazoa</taxon>
        <taxon>Chordata</taxon>
        <taxon>Craniata</taxon>
        <taxon>Vertebrata</taxon>
        <taxon>Euteleostomi</taxon>
        <taxon>Mammalia</taxon>
        <taxon>Eutheria</taxon>
        <taxon>Euarchontoglires</taxon>
        <taxon>Glires</taxon>
        <taxon>Rodentia</taxon>
        <taxon>Myomorpha</taxon>
        <taxon>Muroidea</taxon>
        <taxon>Muridae</taxon>
        <taxon>Murinae</taxon>
        <taxon>Rattus</taxon>
    </lineage>
</organism>
<feature type="chain" id="PRO_0000109551" description="Signal peptidase complex catalytic subunit SEC11C">
    <location>
        <begin position="1"/>
        <end position="192"/>
    </location>
</feature>
<feature type="topological domain" description="Cytoplasmic" evidence="1">
    <location>
        <begin position="1"/>
        <end position="28"/>
    </location>
</feature>
<feature type="transmembrane region" description="Helical; Signal-anchor for type II membrane protein" evidence="3">
    <location>
        <begin position="29"/>
        <end position="48"/>
    </location>
</feature>
<feature type="topological domain" description="Lumenal" evidence="1">
    <location>
        <begin position="49"/>
        <end position="192"/>
    </location>
</feature>
<feature type="region of interest" description="C-terminal short (CTS) helix" evidence="2">
    <location>
        <begin position="177"/>
        <end position="188"/>
    </location>
</feature>
<feature type="active site" description="Charge relay system" evidence="2">
    <location>
        <position position="68"/>
    </location>
</feature>
<feature type="active site" description="Charge relay system" evidence="2">
    <location>
        <position position="108"/>
    </location>
</feature>
<feature type="active site" description="Charge relay system" evidence="2">
    <location>
        <position position="134"/>
    </location>
</feature>
<evidence type="ECO:0000250" key="1">
    <source>
        <dbReference type="UniProtKB" id="P13679"/>
    </source>
</evidence>
<evidence type="ECO:0000250" key="2">
    <source>
        <dbReference type="UniProtKB" id="Q9BY50"/>
    </source>
</evidence>
<evidence type="ECO:0000255" key="3"/>
<evidence type="ECO:0000305" key="4"/>
<gene>
    <name type="primary">Sec11c</name>
    <name type="synonym">Sec11l3</name>
    <name type="synonym">Spc21</name>
</gene>
<comment type="function">
    <text evidence="2">Catalytic component of the signal peptidase complex (SPC) which catalyzes the cleavage of N-terminal signal sequences from nascent proteins as they are translocated into the lumen of the endoplasmic reticulum. Specifically cleaves N-terminal signal peptides that contain a hydrophobic alpha-helix (h-region) shorter than 18-20 amino acids.</text>
</comment>
<comment type="catalytic activity">
    <reaction evidence="2">
        <text>Cleavage of hydrophobic, N-terminal signal or leader sequences from secreted and periplasmic proteins.</text>
        <dbReference type="EC" id="3.4.21.89"/>
    </reaction>
</comment>
<comment type="subunit">
    <text evidence="2">Component of the signal peptidase complex paralog C (SPC-C) composed of a catalytic subunit SEC11C and three accessory subunits SPCS1, SPCS2 and SPCS3. Within the complex, interacts with SPCS2 and SPCS3. The complex induces a local thinning of the ER membrane which is used to measure the length of the signal peptide (SP) h-region of protein substrates. This ensures the selectivity of the complex towards h-regions shorter than 18-20 amino acids.</text>
</comment>
<comment type="subcellular location">
    <subcellularLocation>
        <location evidence="1">Endoplasmic reticulum membrane</location>
        <topology evidence="1">Single-pass type II membrane protein</topology>
    </subcellularLocation>
</comment>
<comment type="domain">
    <text evidence="2">The C-terminal short (CTS) helix is essential for catalytic activity. It may be accommodated as a transmembrane helix in the thinned membrane environment of the complex, similarly to the signal peptide in the complex substrates.</text>
</comment>
<comment type="PTM">
    <text evidence="2">May undergo processing at the N-terminus.</text>
</comment>
<comment type="similarity">
    <text evidence="4">Belongs to the peptidase S26B family.</text>
</comment>
<keyword id="KW-0256">Endoplasmic reticulum</keyword>
<keyword id="KW-0378">Hydrolase</keyword>
<keyword id="KW-0472">Membrane</keyword>
<keyword id="KW-0645">Protease</keyword>
<keyword id="KW-1185">Reference proteome</keyword>
<keyword id="KW-0735">Signal-anchor</keyword>
<keyword id="KW-0812">Transmembrane</keyword>
<keyword id="KW-1133">Transmembrane helix</keyword>
<sequence>MVRAGAVGTHLPTSSLDIFGDLRKMNKRQLYYQVLNFAMIVSSALMIWKGLIVLTGSESPIVVVLSGSMEPAFHRGDLLFLTNFREDPIRAGEIVVFKVEGRDIPIVHRVIKVHEKDNGDIKFLTKGDNNEVDDRGLYKEGQNWLEKKDVVGRARGFLPYVGMVTIIMNDYPKFKYALVAVMGAYVLLKRES</sequence>
<dbReference type="EC" id="3.4.21.89" evidence="2"/>
<dbReference type="EMBL" id="AB022714">
    <property type="protein sequence ID" value="BAA76439.1"/>
    <property type="molecule type" value="mRNA"/>
</dbReference>
<dbReference type="RefSeq" id="NP_705892.1">
    <property type="nucleotide sequence ID" value="NM_153628.2"/>
</dbReference>
<dbReference type="SMR" id="Q9WTR7"/>
<dbReference type="FunCoup" id="Q9WTR7">
    <property type="interactions" value="662"/>
</dbReference>
<dbReference type="STRING" id="10116.ENSRNOP00000022958"/>
<dbReference type="MEROPS" id="S26.010"/>
<dbReference type="PhosphoSitePlus" id="Q9WTR7"/>
<dbReference type="jPOST" id="Q9WTR7"/>
<dbReference type="PaxDb" id="10116-ENSRNOP00000022958"/>
<dbReference type="GeneID" id="266758"/>
<dbReference type="KEGG" id="rno:266758"/>
<dbReference type="UCSC" id="RGD:628665">
    <property type="organism name" value="rat"/>
</dbReference>
<dbReference type="AGR" id="RGD:628665"/>
<dbReference type="CTD" id="90701"/>
<dbReference type="RGD" id="628665">
    <property type="gene designation" value="Sec11c"/>
</dbReference>
<dbReference type="eggNOG" id="KOG3342">
    <property type="taxonomic scope" value="Eukaryota"/>
</dbReference>
<dbReference type="InParanoid" id="Q9WTR7"/>
<dbReference type="OrthoDB" id="8505at9989"/>
<dbReference type="PhylomeDB" id="Q9WTR7"/>
<dbReference type="Reactome" id="R-RNO-422085">
    <property type="pathway name" value="Synthesis, secretion, and deacylation of Ghrelin"/>
</dbReference>
<dbReference type="PRO" id="PR:Q9WTR7"/>
<dbReference type="Proteomes" id="UP000002494">
    <property type="component" value="Unplaced"/>
</dbReference>
<dbReference type="GO" id="GO:0005789">
    <property type="term" value="C:endoplasmic reticulum membrane"/>
    <property type="evidence" value="ECO:0000266"/>
    <property type="project" value="RGD"/>
</dbReference>
<dbReference type="GO" id="GO:0005787">
    <property type="term" value="C:signal peptidase complex"/>
    <property type="evidence" value="ECO:0000250"/>
    <property type="project" value="UniProtKB"/>
</dbReference>
<dbReference type="GO" id="GO:0008233">
    <property type="term" value="F:peptidase activity"/>
    <property type="evidence" value="ECO:0000318"/>
    <property type="project" value="GO_Central"/>
</dbReference>
<dbReference type="GO" id="GO:0004252">
    <property type="term" value="F:serine-type endopeptidase activity"/>
    <property type="evidence" value="ECO:0000250"/>
    <property type="project" value="UniProtKB"/>
</dbReference>
<dbReference type="GO" id="GO:0006465">
    <property type="term" value="P:signal peptide processing"/>
    <property type="evidence" value="ECO:0000250"/>
    <property type="project" value="UniProtKB"/>
</dbReference>
<dbReference type="CDD" id="cd06530">
    <property type="entry name" value="S26_SPase_I"/>
    <property type="match status" value="1"/>
</dbReference>
<dbReference type="FunFam" id="2.10.109.10:FF:000003">
    <property type="entry name" value="Signal peptidase complex catalytic subunit SEC11"/>
    <property type="match status" value="1"/>
</dbReference>
<dbReference type="Gene3D" id="2.10.109.10">
    <property type="entry name" value="Umud Fragment, subunit A"/>
    <property type="match status" value="1"/>
</dbReference>
<dbReference type="InterPro" id="IPR036286">
    <property type="entry name" value="LexA/Signal_pep-like_sf"/>
</dbReference>
<dbReference type="InterPro" id="IPR019758">
    <property type="entry name" value="Pept_S26A_signal_pept_1_CS"/>
</dbReference>
<dbReference type="InterPro" id="IPR019756">
    <property type="entry name" value="Pept_S26A_signal_pept_1_Ser-AS"/>
</dbReference>
<dbReference type="InterPro" id="IPR015927">
    <property type="entry name" value="Peptidase_S24_S26A/B/C"/>
</dbReference>
<dbReference type="InterPro" id="IPR019533">
    <property type="entry name" value="Peptidase_S26"/>
</dbReference>
<dbReference type="InterPro" id="IPR001733">
    <property type="entry name" value="Peptidase_S26B"/>
</dbReference>
<dbReference type="NCBIfam" id="TIGR02228">
    <property type="entry name" value="sigpep_I_arch"/>
    <property type="match status" value="1"/>
</dbReference>
<dbReference type="PANTHER" id="PTHR10806">
    <property type="entry name" value="SIGNAL PEPTIDASE COMPLEX CATALYTIC SUBUNIT SEC11"/>
    <property type="match status" value="1"/>
</dbReference>
<dbReference type="PANTHER" id="PTHR10806:SF12">
    <property type="entry name" value="SIGNAL PEPTIDASE COMPLEX CATALYTIC SUBUNIT SEC11C"/>
    <property type="match status" value="1"/>
</dbReference>
<dbReference type="Pfam" id="PF00717">
    <property type="entry name" value="Peptidase_S24"/>
    <property type="match status" value="1"/>
</dbReference>
<dbReference type="PRINTS" id="PR00728">
    <property type="entry name" value="SIGNALPTASE"/>
</dbReference>
<dbReference type="SUPFAM" id="SSF51306">
    <property type="entry name" value="LexA/Signal peptidase"/>
    <property type="match status" value="1"/>
</dbReference>
<dbReference type="PROSITE" id="PS00501">
    <property type="entry name" value="SPASE_I_1"/>
    <property type="match status" value="1"/>
</dbReference>
<dbReference type="PROSITE" id="PS00761">
    <property type="entry name" value="SPASE_I_3"/>
    <property type="match status" value="1"/>
</dbReference>
<accession>Q9WTR7</accession>
<protein>
    <recommendedName>
        <fullName>Signal peptidase complex catalytic subunit SEC11C</fullName>
        <ecNumber evidence="2">3.4.21.89</ecNumber>
    </recommendedName>
    <alternativeName>
        <fullName>Microsomal signal peptidase 21 kDa subunit</fullName>
        <shortName>SPase 21 kDa subunit</shortName>
    </alternativeName>
    <alternativeName>
        <fullName>SEC11 homolog C</fullName>
    </alternativeName>
    <alternativeName>
        <fullName>SEC11-like protein 3</fullName>
    </alternativeName>
    <alternativeName>
        <fullName>SPC21</fullName>
    </alternativeName>
</protein>
<proteinExistence type="evidence at transcript level"/>
<name>SC11C_RAT</name>
<reference key="1">
    <citation type="submission" date="1999-01" db="EMBL/GenBank/DDBJ databases">
        <title>Rat mRNA homologous to signal peptidase.</title>
        <authorList>
            <person name="Shiizaki K."/>
        </authorList>
    </citation>
    <scope>NUCLEOTIDE SEQUENCE [MRNA]</scope>
    <source>
        <strain>Sprague-Dawley</strain>
        <tissue>Pituitary</tissue>
    </source>
</reference>